<proteinExistence type="evidence at protein level"/>
<keyword id="KW-0002">3D-structure</keyword>
<keyword id="KW-0150">Chloroplast</keyword>
<keyword id="KW-1015">Disulfide bond</keyword>
<keyword id="KW-0249">Electron transport</keyword>
<keyword id="KW-0934">Plastid</keyword>
<keyword id="KW-0676">Redox-active center</keyword>
<keyword id="KW-1185">Reference proteome</keyword>
<keyword id="KW-0809">Transit peptide</keyword>
<keyword id="KW-0813">Transport</keyword>
<comment type="function">
    <text evidence="4">Thiol-disulfide oxidoreductase that poorly activates chloroplastic malate dehydrogenase (NADP-MDH) and fructose-1,6-bisphosphatase. Provides reducing equivalents for peroxiredoxin Q.</text>
</comment>
<comment type="subcellular location">
    <subcellularLocation>
        <location evidence="4 5">Plastid</location>
        <location evidence="4 5">Chloroplast stroma</location>
    </subcellularLocation>
</comment>
<comment type="tissue specificity">
    <text evidence="4">Expressed in roots and seeds.</text>
</comment>
<comment type="developmental stage">
    <text evidence="4">Expression increases in developing seeds and decreases during seed germination.</text>
</comment>
<comment type="similarity">
    <text evidence="6">Belongs to the thioredoxin family. Plant Y-type subfamily.</text>
</comment>
<comment type="sequence caution" evidence="6">
    <conflict type="erroneous gene model prediction">
        <sequence resource="EMBL-CDS" id="AAF04439"/>
    </conflict>
</comment>
<dbReference type="EMBL" id="AC010718">
    <property type="protein sequence ID" value="AAF04439.1"/>
    <property type="status" value="ALT_SEQ"/>
    <property type="molecule type" value="Genomic_DNA"/>
</dbReference>
<dbReference type="EMBL" id="CP002684">
    <property type="protein sequence ID" value="AEE35886.1"/>
    <property type="molecule type" value="Genomic_DNA"/>
</dbReference>
<dbReference type="EMBL" id="BT010677">
    <property type="protein sequence ID" value="AAR20734.1"/>
    <property type="molecule type" value="mRNA"/>
</dbReference>
<dbReference type="EMBL" id="BT010965">
    <property type="protein sequence ID" value="AAR24743.1"/>
    <property type="molecule type" value="mRNA"/>
</dbReference>
<dbReference type="EMBL" id="AK227422">
    <property type="protein sequence ID" value="BAE99426.1"/>
    <property type="molecule type" value="mRNA"/>
</dbReference>
<dbReference type="PIR" id="B96796">
    <property type="entry name" value="B96796"/>
</dbReference>
<dbReference type="RefSeq" id="NP_177802.2">
    <property type="nucleotide sequence ID" value="NM_106326.8"/>
</dbReference>
<dbReference type="PDB" id="7BZK">
    <property type="method" value="X-ray"/>
    <property type="resolution" value="1.59 A"/>
    <property type="chains" value="B=63-172"/>
</dbReference>
<dbReference type="PDBsum" id="7BZK"/>
<dbReference type="SMR" id="Q6NPF9"/>
<dbReference type="BioGRID" id="29229">
    <property type="interactions" value="13"/>
</dbReference>
<dbReference type="FunCoup" id="Q6NPF9">
    <property type="interactions" value="1918"/>
</dbReference>
<dbReference type="IntAct" id="Q6NPF9">
    <property type="interactions" value="14"/>
</dbReference>
<dbReference type="STRING" id="3702.Q6NPF9"/>
<dbReference type="PaxDb" id="3702-AT1G76760.1"/>
<dbReference type="ProteomicsDB" id="232473"/>
<dbReference type="EnsemblPlants" id="AT1G76760.1">
    <property type="protein sequence ID" value="AT1G76760.1"/>
    <property type="gene ID" value="AT1G76760"/>
</dbReference>
<dbReference type="GeneID" id="844010"/>
<dbReference type="Gramene" id="AT1G76760.1">
    <property type="protein sequence ID" value="AT1G76760.1"/>
    <property type="gene ID" value="AT1G76760"/>
</dbReference>
<dbReference type="KEGG" id="ath:AT1G76760"/>
<dbReference type="Araport" id="AT1G76760"/>
<dbReference type="TAIR" id="AT1G76760">
    <property type="gene designation" value="TY1"/>
</dbReference>
<dbReference type="eggNOG" id="KOG0910">
    <property type="taxonomic scope" value="Eukaryota"/>
</dbReference>
<dbReference type="HOGENOM" id="CLU_090389_0_3_1"/>
<dbReference type="InParanoid" id="Q6NPF9"/>
<dbReference type="OMA" id="FRKRWIT"/>
<dbReference type="OrthoDB" id="2121326at2759"/>
<dbReference type="PhylomeDB" id="Q6NPF9"/>
<dbReference type="PRO" id="PR:Q6NPF9"/>
<dbReference type="Proteomes" id="UP000006548">
    <property type="component" value="Chromosome 1"/>
</dbReference>
<dbReference type="ExpressionAtlas" id="Q6NPF9">
    <property type="expression patterns" value="baseline and differential"/>
</dbReference>
<dbReference type="GO" id="GO:0009507">
    <property type="term" value="C:chloroplast"/>
    <property type="evidence" value="ECO:0000314"/>
    <property type="project" value="UniProtKB"/>
</dbReference>
<dbReference type="GO" id="GO:0009570">
    <property type="term" value="C:chloroplast stroma"/>
    <property type="evidence" value="ECO:0000314"/>
    <property type="project" value="TAIR"/>
</dbReference>
<dbReference type="GO" id="GO:0008047">
    <property type="term" value="F:enzyme activator activity"/>
    <property type="evidence" value="ECO:0000314"/>
    <property type="project" value="UniProtKB"/>
</dbReference>
<dbReference type="GO" id="GO:0015035">
    <property type="term" value="F:protein-disulfide reductase activity"/>
    <property type="evidence" value="ECO:0000314"/>
    <property type="project" value="UniProtKB"/>
</dbReference>
<dbReference type="GO" id="GO:0043085">
    <property type="term" value="P:positive regulation of catalytic activity"/>
    <property type="evidence" value="ECO:0000314"/>
    <property type="project" value="UniProtKB"/>
</dbReference>
<dbReference type="CDD" id="cd02947">
    <property type="entry name" value="TRX_family"/>
    <property type="match status" value="1"/>
</dbReference>
<dbReference type="FunFam" id="3.40.30.10:FF:000001">
    <property type="entry name" value="Thioredoxin"/>
    <property type="match status" value="1"/>
</dbReference>
<dbReference type="Gene3D" id="3.40.30.10">
    <property type="entry name" value="Glutaredoxin"/>
    <property type="match status" value="1"/>
</dbReference>
<dbReference type="InterPro" id="IPR005746">
    <property type="entry name" value="Thioredoxin"/>
</dbReference>
<dbReference type="InterPro" id="IPR036249">
    <property type="entry name" value="Thioredoxin-like_sf"/>
</dbReference>
<dbReference type="InterPro" id="IPR017937">
    <property type="entry name" value="Thioredoxin_CS"/>
</dbReference>
<dbReference type="InterPro" id="IPR013766">
    <property type="entry name" value="Thioredoxin_domain"/>
</dbReference>
<dbReference type="NCBIfam" id="TIGR01068">
    <property type="entry name" value="thioredoxin"/>
    <property type="match status" value="1"/>
</dbReference>
<dbReference type="PANTHER" id="PTHR45663">
    <property type="entry name" value="GEO12009P1"/>
    <property type="match status" value="1"/>
</dbReference>
<dbReference type="PANTHER" id="PTHR45663:SF15">
    <property type="entry name" value="THIOREDOXIN Y1, CHLOROPLASTIC"/>
    <property type="match status" value="1"/>
</dbReference>
<dbReference type="Pfam" id="PF00085">
    <property type="entry name" value="Thioredoxin"/>
    <property type="match status" value="1"/>
</dbReference>
<dbReference type="PRINTS" id="PR00421">
    <property type="entry name" value="THIOREDOXIN"/>
</dbReference>
<dbReference type="SUPFAM" id="SSF52833">
    <property type="entry name" value="Thioredoxin-like"/>
    <property type="match status" value="1"/>
</dbReference>
<dbReference type="PROSITE" id="PS00194">
    <property type="entry name" value="THIOREDOXIN_1"/>
    <property type="match status" value="1"/>
</dbReference>
<dbReference type="PROSITE" id="PS51352">
    <property type="entry name" value="THIOREDOXIN_2"/>
    <property type="match status" value="1"/>
</dbReference>
<accession>Q6NPF9</accession>
<accession>Q9SRD7</accession>
<feature type="transit peptide" description="Chloroplast" evidence="2">
    <location>
        <begin position="1"/>
        <end position="62"/>
    </location>
</feature>
<feature type="chain" id="PRO_0000394539" description="Thioredoxin Y1, chloroplastic">
    <location>
        <begin position="63"/>
        <end position="172"/>
    </location>
</feature>
<feature type="domain" description="Thioredoxin" evidence="3">
    <location>
        <begin position="63"/>
        <end position="169"/>
    </location>
</feature>
<feature type="active site" description="Nucleophile" evidence="1">
    <location>
        <position position="93"/>
    </location>
</feature>
<feature type="active site" description="Nucleophile" evidence="1">
    <location>
        <position position="96"/>
    </location>
</feature>
<feature type="site" description="Deprotonates C-terminal active site Cys" evidence="1">
    <location>
        <position position="87"/>
    </location>
</feature>
<feature type="site" description="Contributes to redox potential value" evidence="1">
    <location>
        <position position="94"/>
    </location>
</feature>
<feature type="site" description="Contributes to redox potential value" evidence="1">
    <location>
        <position position="95"/>
    </location>
</feature>
<feature type="disulfide bond" description="Redox-active" evidence="3">
    <location>
        <begin position="93"/>
        <end position="96"/>
    </location>
</feature>
<feature type="helix" evidence="7">
    <location>
        <begin position="70"/>
        <end position="79"/>
    </location>
</feature>
<feature type="strand" evidence="7">
    <location>
        <begin position="84"/>
        <end position="89"/>
    </location>
</feature>
<feature type="helix" evidence="7">
    <location>
        <begin position="94"/>
        <end position="109"/>
    </location>
</feature>
<feature type="turn" evidence="7">
    <location>
        <begin position="110"/>
        <end position="113"/>
    </location>
</feature>
<feature type="strand" evidence="7">
    <location>
        <begin position="115"/>
        <end position="120"/>
    </location>
</feature>
<feature type="turn" evidence="7">
    <location>
        <begin position="121"/>
        <end position="123"/>
    </location>
</feature>
<feature type="helix" evidence="7">
    <location>
        <begin position="125"/>
        <end position="130"/>
    </location>
</feature>
<feature type="strand" evidence="7">
    <location>
        <begin position="135"/>
        <end position="143"/>
    </location>
</feature>
<feature type="strand" evidence="7">
    <location>
        <begin position="146"/>
        <end position="153"/>
    </location>
</feature>
<feature type="helix" evidence="7">
    <location>
        <begin position="157"/>
        <end position="168"/>
    </location>
</feature>
<protein>
    <recommendedName>
        <fullName>Thioredoxin Y1, chloroplastic</fullName>
        <shortName>AtTrxy1</shortName>
    </recommendedName>
</protein>
<name>TRXY1_ARATH</name>
<sequence>MASISLSSSTVPSLNSKESSGVSAFASRSISAVKFQFPVRRVRTGDLKFPSLSSTTRCTPRRIEAKKQTFDSFEDLLVNSDKPVLVDYYATWCGPCQFMVPILNEVSETLKDKIQVVKIDTEKYPSIANKYKIEALPTFILFKDGEPCDRFEGALTAKQLIQRIEDSLKVKP</sequence>
<gene>
    <name type="ordered locus">At1g76760</name>
    <name type="ORF">F28O16.13</name>
</gene>
<reference key="1">
    <citation type="journal article" date="2000" name="Nature">
        <title>Sequence and analysis of chromosome 1 of the plant Arabidopsis thaliana.</title>
        <authorList>
            <person name="Theologis A."/>
            <person name="Ecker J.R."/>
            <person name="Palm C.J."/>
            <person name="Federspiel N.A."/>
            <person name="Kaul S."/>
            <person name="White O."/>
            <person name="Alonso J."/>
            <person name="Altafi H."/>
            <person name="Araujo R."/>
            <person name="Bowman C.L."/>
            <person name="Brooks S.Y."/>
            <person name="Buehler E."/>
            <person name="Chan A."/>
            <person name="Chao Q."/>
            <person name="Chen H."/>
            <person name="Cheuk R.F."/>
            <person name="Chin C.W."/>
            <person name="Chung M.K."/>
            <person name="Conn L."/>
            <person name="Conway A.B."/>
            <person name="Conway A.R."/>
            <person name="Creasy T.H."/>
            <person name="Dewar K."/>
            <person name="Dunn P."/>
            <person name="Etgu P."/>
            <person name="Feldblyum T.V."/>
            <person name="Feng J.-D."/>
            <person name="Fong B."/>
            <person name="Fujii C.Y."/>
            <person name="Gill J.E."/>
            <person name="Goldsmith A.D."/>
            <person name="Haas B."/>
            <person name="Hansen N.F."/>
            <person name="Hughes B."/>
            <person name="Huizar L."/>
            <person name="Hunter J.L."/>
            <person name="Jenkins J."/>
            <person name="Johnson-Hopson C."/>
            <person name="Khan S."/>
            <person name="Khaykin E."/>
            <person name="Kim C.J."/>
            <person name="Koo H.L."/>
            <person name="Kremenetskaia I."/>
            <person name="Kurtz D.B."/>
            <person name="Kwan A."/>
            <person name="Lam B."/>
            <person name="Langin-Hooper S."/>
            <person name="Lee A."/>
            <person name="Lee J.M."/>
            <person name="Lenz C.A."/>
            <person name="Li J.H."/>
            <person name="Li Y.-P."/>
            <person name="Lin X."/>
            <person name="Liu S.X."/>
            <person name="Liu Z.A."/>
            <person name="Luros J.S."/>
            <person name="Maiti R."/>
            <person name="Marziali A."/>
            <person name="Militscher J."/>
            <person name="Miranda M."/>
            <person name="Nguyen M."/>
            <person name="Nierman W.C."/>
            <person name="Osborne B.I."/>
            <person name="Pai G."/>
            <person name="Peterson J."/>
            <person name="Pham P.K."/>
            <person name="Rizzo M."/>
            <person name="Rooney T."/>
            <person name="Rowley D."/>
            <person name="Sakano H."/>
            <person name="Salzberg S.L."/>
            <person name="Schwartz J.R."/>
            <person name="Shinn P."/>
            <person name="Southwick A.M."/>
            <person name="Sun H."/>
            <person name="Tallon L.J."/>
            <person name="Tambunga G."/>
            <person name="Toriumi M.J."/>
            <person name="Town C.D."/>
            <person name="Utterback T."/>
            <person name="Van Aken S."/>
            <person name="Vaysberg M."/>
            <person name="Vysotskaia V.S."/>
            <person name="Walker M."/>
            <person name="Wu D."/>
            <person name="Yu G."/>
            <person name="Fraser C.M."/>
            <person name="Venter J.C."/>
            <person name="Davis R.W."/>
        </authorList>
    </citation>
    <scope>NUCLEOTIDE SEQUENCE [LARGE SCALE GENOMIC DNA]</scope>
    <source>
        <strain>cv. Columbia</strain>
    </source>
</reference>
<reference key="2">
    <citation type="journal article" date="2017" name="Plant J.">
        <title>Araport11: a complete reannotation of the Arabidopsis thaliana reference genome.</title>
        <authorList>
            <person name="Cheng C.Y."/>
            <person name="Krishnakumar V."/>
            <person name="Chan A.P."/>
            <person name="Thibaud-Nissen F."/>
            <person name="Schobel S."/>
            <person name="Town C.D."/>
        </authorList>
    </citation>
    <scope>GENOME REANNOTATION</scope>
    <source>
        <strain>cv. Columbia</strain>
    </source>
</reference>
<reference key="3">
    <citation type="submission" date="2003-12" db="EMBL/GenBank/DDBJ databases">
        <title>Arabidopsis cDNA clones.</title>
        <authorList>
            <person name="Shinn P."/>
            <person name="Chen H."/>
            <person name="Cheuk R.F."/>
            <person name="Kim C.J."/>
            <person name="Ecker J.R."/>
        </authorList>
    </citation>
    <scope>NUCLEOTIDE SEQUENCE [LARGE SCALE MRNA]</scope>
    <source>
        <strain>cv. Columbia</strain>
    </source>
</reference>
<reference key="4">
    <citation type="submission" date="2006-07" db="EMBL/GenBank/DDBJ databases">
        <title>Large-scale analysis of RIKEN Arabidopsis full-length (RAFL) cDNAs.</title>
        <authorList>
            <person name="Totoki Y."/>
            <person name="Seki M."/>
            <person name="Ishida J."/>
            <person name="Nakajima M."/>
            <person name="Enju A."/>
            <person name="Kamiya A."/>
            <person name="Narusaka M."/>
            <person name="Shin-i T."/>
            <person name="Nakagawa M."/>
            <person name="Sakamoto N."/>
            <person name="Oishi K."/>
            <person name="Kohara Y."/>
            <person name="Kobayashi M."/>
            <person name="Toyoda A."/>
            <person name="Sakaki Y."/>
            <person name="Sakurai T."/>
            <person name="Iida K."/>
            <person name="Akiyama K."/>
            <person name="Satou M."/>
            <person name="Toyoda T."/>
            <person name="Konagaya A."/>
            <person name="Carninci P."/>
            <person name="Kawai J."/>
            <person name="Hayashizaki Y."/>
            <person name="Shinozaki K."/>
        </authorList>
    </citation>
    <scope>NUCLEOTIDE SEQUENCE [LARGE SCALE MRNA]</scope>
    <source>
        <strain>cv. Columbia</strain>
    </source>
</reference>
<reference key="5">
    <citation type="journal article" date="2004" name="Plant Physiol.">
        <title>Characterization of plastidial thioredoxins from Arabidopsis belonging to the new y-type.</title>
        <authorList>
            <person name="Collin V."/>
            <person name="Lamkemeyer P."/>
            <person name="Miginiac-Maslow M."/>
            <person name="Hirasawa M."/>
            <person name="Knaff D.B."/>
            <person name="Dietz K.J."/>
            <person name="Issakidis-Bourguet E."/>
        </authorList>
    </citation>
    <scope>FUNCTION</scope>
    <scope>SUBCELLULAR LOCATION</scope>
    <scope>TISSUE SPECIFICITY</scope>
    <scope>DEVELOPMENTAL STAGE</scope>
</reference>
<reference key="6">
    <citation type="journal article" date="2009" name="Mol. Plant">
        <title>Comparative genomic study of the thioredoxin family in photosynthetic organisms with emphasis on Populus trichocarpa.</title>
        <authorList>
            <person name="Chibani K."/>
            <person name="Wingsle G."/>
            <person name="Jacquot J.P."/>
            <person name="Gelhaye E."/>
            <person name="Rouhier N."/>
        </authorList>
    </citation>
    <scope>GENE FAMILY</scope>
    <scope>NOMENCLATURE</scope>
</reference>
<reference key="7">
    <citation type="journal article" date="2009" name="Plant Mol. Biol.">
        <title>A novel extended family of stromal thioredoxins.</title>
        <authorList>
            <person name="Cain P."/>
            <person name="Hall M."/>
            <person name="Schroder W.P."/>
            <person name="Kieselbach T."/>
            <person name="Robinson C."/>
        </authorList>
    </citation>
    <scope>SUBCELLULAR LOCATION</scope>
</reference>
<organism>
    <name type="scientific">Arabidopsis thaliana</name>
    <name type="common">Mouse-ear cress</name>
    <dbReference type="NCBI Taxonomy" id="3702"/>
    <lineage>
        <taxon>Eukaryota</taxon>
        <taxon>Viridiplantae</taxon>
        <taxon>Streptophyta</taxon>
        <taxon>Embryophyta</taxon>
        <taxon>Tracheophyta</taxon>
        <taxon>Spermatophyta</taxon>
        <taxon>Magnoliopsida</taxon>
        <taxon>eudicotyledons</taxon>
        <taxon>Gunneridae</taxon>
        <taxon>Pentapetalae</taxon>
        <taxon>rosids</taxon>
        <taxon>malvids</taxon>
        <taxon>Brassicales</taxon>
        <taxon>Brassicaceae</taxon>
        <taxon>Camelineae</taxon>
        <taxon>Arabidopsis</taxon>
    </lineage>
</organism>
<evidence type="ECO:0000250" key="1"/>
<evidence type="ECO:0000255" key="2"/>
<evidence type="ECO:0000255" key="3">
    <source>
        <dbReference type="PROSITE-ProRule" id="PRU00691"/>
    </source>
</evidence>
<evidence type="ECO:0000269" key="4">
    <source>
    </source>
</evidence>
<evidence type="ECO:0000269" key="5">
    <source>
    </source>
</evidence>
<evidence type="ECO:0000305" key="6"/>
<evidence type="ECO:0007829" key="7">
    <source>
        <dbReference type="PDB" id="7BZK"/>
    </source>
</evidence>